<accession>P0DA54</accession>
<accession>Q8K6T3</accession>
<name>Y1149_STRP3</name>
<protein>
    <recommendedName>
        <fullName>DegV domain-containing protein SpyM3_1149</fullName>
    </recommendedName>
</protein>
<gene>
    <name type="ordered locus">SpyM3_1149</name>
</gene>
<feature type="chain" id="PRO_0000209805" description="DegV domain-containing protein SpyM3_1149">
    <location>
        <begin position="1"/>
        <end position="279"/>
    </location>
</feature>
<feature type="domain" description="DegV" evidence="3">
    <location>
        <begin position="4"/>
        <end position="278"/>
    </location>
</feature>
<feature type="binding site" evidence="2">
    <location>
        <position position="62"/>
    </location>
    <ligand>
        <name>hexadecanoate</name>
        <dbReference type="ChEBI" id="CHEBI:7896"/>
    </ligand>
</feature>
<feature type="binding site" evidence="2">
    <location>
        <position position="95"/>
    </location>
    <ligand>
        <name>hexadecanoate</name>
        <dbReference type="ChEBI" id="CHEBI:7896"/>
    </ligand>
</feature>
<keyword id="KW-0446">Lipid-binding</keyword>
<comment type="function">
    <text evidence="1">May bind long-chain fatty acids, such as palmitate, and may play a role in lipid transport or fatty acid metabolism.</text>
</comment>
<sequence length="279" mass="29982">MGTIKIVTDSSITIEPELIKALDITVVPLSVMIDSKLYSDNDLKEEGHFLSLMKASKSLPKTSQPPVGLFAETYENLVKKGVTDIVAIHLSPALSGTIEASRQGAEIAETPVTVLDSGFTDQAMKFQVVEAAKMAKAGASLNEILAAVQAIKSKTELYIGVSTLENLVKGGRIGRVTGVLSSLLNVKVVMALKNDELKTLVKGRGNKTFTKWLDSYLAKNSHRPIAEIAISYAGEASLALTLKERIAAYYNHSISVLETGSIIQTHTGEGAFAVMVRYE</sequence>
<proteinExistence type="inferred from homology"/>
<dbReference type="EMBL" id="AE014074">
    <property type="protein sequence ID" value="AAM79756.1"/>
    <property type="molecule type" value="Genomic_DNA"/>
</dbReference>
<dbReference type="RefSeq" id="WP_011054703.1">
    <property type="nucleotide sequence ID" value="NC_004070.1"/>
</dbReference>
<dbReference type="SMR" id="P0DA54"/>
<dbReference type="KEGG" id="spg:SpyM3_1149"/>
<dbReference type="HOGENOM" id="CLU_048251_3_2_9"/>
<dbReference type="Proteomes" id="UP000000564">
    <property type="component" value="Chromosome"/>
</dbReference>
<dbReference type="GO" id="GO:0008289">
    <property type="term" value="F:lipid binding"/>
    <property type="evidence" value="ECO:0007669"/>
    <property type="project" value="UniProtKB-KW"/>
</dbReference>
<dbReference type="Gene3D" id="3.30.1180.10">
    <property type="match status" value="1"/>
</dbReference>
<dbReference type="Gene3D" id="3.40.50.10170">
    <property type="match status" value="1"/>
</dbReference>
<dbReference type="InterPro" id="IPR003797">
    <property type="entry name" value="DegV"/>
</dbReference>
<dbReference type="InterPro" id="IPR043168">
    <property type="entry name" value="DegV_C"/>
</dbReference>
<dbReference type="InterPro" id="IPR050270">
    <property type="entry name" value="DegV_domain_contain"/>
</dbReference>
<dbReference type="NCBIfam" id="TIGR00762">
    <property type="entry name" value="DegV"/>
    <property type="match status" value="1"/>
</dbReference>
<dbReference type="PANTHER" id="PTHR33434">
    <property type="entry name" value="DEGV DOMAIN-CONTAINING PROTEIN DR_1986-RELATED"/>
    <property type="match status" value="1"/>
</dbReference>
<dbReference type="PANTHER" id="PTHR33434:SF8">
    <property type="entry name" value="DEGV DOMAIN-CONTAINING PROTEIN SPR1019"/>
    <property type="match status" value="1"/>
</dbReference>
<dbReference type="Pfam" id="PF02645">
    <property type="entry name" value="DegV"/>
    <property type="match status" value="1"/>
</dbReference>
<dbReference type="SUPFAM" id="SSF82549">
    <property type="entry name" value="DAK1/DegV-like"/>
    <property type="match status" value="1"/>
</dbReference>
<dbReference type="PROSITE" id="PS51482">
    <property type="entry name" value="DEGV"/>
    <property type="match status" value="1"/>
</dbReference>
<evidence type="ECO:0000250" key="1"/>
<evidence type="ECO:0000250" key="2">
    <source>
        <dbReference type="UniProtKB" id="Q9X1H9"/>
    </source>
</evidence>
<evidence type="ECO:0000255" key="3">
    <source>
        <dbReference type="PROSITE-ProRule" id="PRU00815"/>
    </source>
</evidence>
<reference key="1">
    <citation type="journal article" date="2002" name="Proc. Natl. Acad. Sci. U.S.A.">
        <title>Genome sequence of a serotype M3 strain of group A Streptococcus: phage-encoded toxins, the high-virulence phenotype, and clone emergence.</title>
        <authorList>
            <person name="Beres S.B."/>
            <person name="Sylva G.L."/>
            <person name="Barbian K.D."/>
            <person name="Lei B."/>
            <person name="Hoff J.S."/>
            <person name="Mammarella N.D."/>
            <person name="Liu M.-Y."/>
            <person name="Smoot J.C."/>
            <person name="Porcella S.F."/>
            <person name="Parkins L.D."/>
            <person name="Campbell D.S."/>
            <person name="Smith T.M."/>
            <person name="McCormick J.K."/>
            <person name="Leung D.Y.M."/>
            <person name="Schlievert P.M."/>
            <person name="Musser J.M."/>
        </authorList>
    </citation>
    <scope>NUCLEOTIDE SEQUENCE [LARGE SCALE GENOMIC DNA]</scope>
    <source>
        <strain>ATCC BAA-595 / MGAS315</strain>
    </source>
</reference>
<organism>
    <name type="scientific">Streptococcus pyogenes serotype M3 (strain ATCC BAA-595 / MGAS315)</name>
    <dbReference type="NCBI Taxonomy" id="198466"/>
    <lineage>
        <taxon>Bacteria</taxon>
        <taxon>Bacillati</taxon>
        <taxon>Bacillota</taxon>
        <taxon>Bacilli</taxon>
        <taxon>Lactobacillales</taxon>
        <taxon>Streptococcaceae</taxon>
        <taxon>Streptococcus</taxon>
    </lineage>
</organism>